<comment type="function">
    <text>Probable thiol-disulfide oxidoreductase that may be involved in the redox regulation of a number of cytosolic enzymes.</text>
</comment>
<comment type="subcellular location">
    <subcellularLocation>
        <location evidence="1">Cytoplasm</location>
    </subcellularLocation>
</comment>
<comment type="similarity">
    <text evidence="4">Belongs to the thioredoxin family. Plant H-type subfamily.</text>
</comment>
<name>TRH22_ORYSJ</name>
<evidence type="ECO:0000250" key="1"/>
<evidence type="ECO:0000255" key="2">
    <source>
        <dbReference type="PROSITE-ProRule" id="PRU00691"/>
    </source>
</evidence>
<evidence type="ECO:0000256" key="3">
    <source>
        <dbReference type="SAM" id="MobiDB-lite"/>
    </source>
</evidence>
<evidence type="ECO:0000305" key="4"/>
<protein>
    <recommendedName>
        <fullName>Thioredoxin H2-2</fullName>
        <shortName>OsTrxh2-2</shortName>
    </recommendedName>
    <alternativeName>
        <fullName>OsTrx10</fullName>
    </alternativeName>
</protein>
<keyword id="KW-0963">Cytoplasm</keyword>
<keyword id="KW-1015">Disulfide bond</keyword>
<keyword id="KW-0249">Electron transport</keyword>
<keyword id="KW-0676">Redox-active center</keyword>
<keyword id="KW-1185">Reference proteome</keyword>
<keyword id="KW-0813">Transport</keyword>
<accession>Q851R5</accession>
<accession>A0A0P0W4A9</accession>
<proteinExistence type="evidence at transcript level"/>
<reference key="1">
    <citation type="journal article" date="2005" name="Genome Res.">
        <title>Sequence, annotation, and analysis of synteny between rice chromosome 3 and diverged grass species.</title>
        <authorList>
            <consortium name="The rice chromosome 3 sequencing consortium"/>
            <person name="Buell C.R."/>
            <person name="Yuan Q."/>
            <person name="Ouyang S."/>
            <person name="Liu J."/>
            <person name="Zhu W."/>
            <person name="Wang A."/>
            <person name="Maiti R."/>
            <person name="Haas B."/>
            <person name="Wortman J."/>
            <person name="Pertea M."/>
            <person name="Jones K.M."/>
            <person name="Kim M."/>
            <person name="Overton L."/>
            <person name="Tsitrin T."/>
            <person name="Fadrosh D."/>
            <person name="Bera J."/>
            <person name="Weaver B."/>
            <person name="Jin S."/>
            <person name="Johri S."/>
            <person name="Reardon M."/>
            <person name="Webb K."/>
            <person name="Hill J."/>
            <person name="Moffat K."/>
            <person name="Tallon L."/>
            <person name="Van Aken S."/>
            <person name="Lewis M."/>
            <person name="Utterback T."/>
            <person name="Feldblyum T."/>
            <person name="Zismann V."/>
            <person name="Iobst S."/>
            <person name="Hsiao J."/>
            <person name="de Vazeille A.R."/>
            <person name="Salzberg S.L."/>
            <person name="White O."/>
            <person name="Fraser C.M."/>
            <person name="Yu Y."/>
            <person name="Kim H."/>
            <person name="Rambo T."/>
            <person name="Currie J."/>
            <person name="Collura K."/>
            <person name="Kernodle-Thompson S."/>
            <person name="Wei F."/>
            <person name="Kudrna K."/>
            <person name="Ammiraju J.S.S."/>
            <person name="Luo M."/>
            <person name="Goicoechea J.L."/>
            <person name="Wing R.A."/>
            <person name="Henry D."/>
            <person name="Oates R."/>
            <person name="Palmer M."/>
            <person name="Pries G."/>
            <person name="Saski C."/>
            <person name="Simmons J."/>
            <person name="Soderlund C."/>
            <person name="Nelson W."/>
            <person name="de la Bastide M."/>
            <person name="Spiegel L."/>
            <person name="Nascimento L."/>
            <person name="Huang E."/>
            <person name="Preston R."/>
            <person name="Zutavern T."/>
            <person name="Palmer L."/>
            <person name="O'Shaughnessy A."/>
            <person name="Dike S."/>
            <person name="McCombie W.R."/>
            <person name="Minx P."/>
            <person name="Cordum H."/>
            <person name="Wilson R."/>
            <person name="Jin W."/>
            <person name="Lee H.R."/>
            <person name="Jiang J."/>
            <person name="Jackson S."/>
        </authorList>
    </citation>
    <scope>NUCLEOTIDE SEQUENCE [LARGE SCALE GENOMIC DNA]</scope>
    <source>
        <strain>cv. Nipponbare</strain>
    </source>
</reference>
<reference key="2">
    <citation type="journal article" date="2005" name="Nature">
        <title>The map-based sequence of the rice genome.</title>
        <authorList>
            <consortium name="International rice genome sequencing project (IRGSP)"/>
        </authorList>
    </citation>
    <scope>NUCLEOTIDE SEQUENCE [LARGE SCALE GENOMIC DNA]</scope>
    <source>
        <strain>cv. Nipponbare</strain>
    </source>
</reference>
<reference key="3">
    <citation type="journal article" date="2008" name="Nucleic Acids Res.">
        <title>The rice annotation project database (RAP-DB): 2008 update.</title>
        <authorList>
            <consortium name="The rice annotation project (RAP)"/>
        </authorList>
    </citation>
    <scope>GENOME REANNOTATION</scope>
    <source>
        <strain>cv. Nipponbare</strain>
    </source>
</reference>
<reference key="4">
    <citation type="journal article" date="2013" name="Rice">
        <title>Improvement of the Oryza sativa Nipponbare reference genome using next generation sequence and optical map data.</title>
        <authorList>
            <person name="Kawahara Y."/>
            <person name="de la Bastide M."/>
            <person name="Hamilton J.P."/>
            <person name="Kanamori H."/>
            <person name="McCombie W.R."/>
            <person name="Ouyang S."/>
            <person name="Schwartz D.C."/>
            <person name="Tanaka T."/>
            <person name="Wu J."/>
            <person name="Zhou S."/>
            <person name="Childs K.L."/>
            <person name="Davidson R.M."/>
            <person name="Lin H."/>
            <person name="Quesada-Ocampo L."/>
            <person name="Vaillancourt B."/>
            <person name="Sakai H."/>
            <person name="Lee S.S."/>
            <person name="Kim J."/>
            <person name="Numa H."/>
            <person name="Itoh T."/>
            <person name="Buell C.R."/>
            <person name="Matsumoto T."/>
        </authorList>
    </citation>
    <scope>GENOME REANNOTATION</scope>
    <source>
        <strain>cv. Nipponbare</strain>
    </source>
</reference>
<reference key="5">
    <citation type="journal article" date="2005" name="PLoS Biol.">
        <title>The genomes of Oryza sativa: a history of duplications.</title>
        <authorList>
            <person name="Yu J."/>
            <person name="Wang J."/>
            <person name="Lin W."/>
            <person name="Li S."/>
            <person name="Li H."/>
            <person name="Zhou J."/>
            <person name="Ni P."/>
            <person name="Dong W."/>
            <person name="Hu S."/>
            <person name="Zeng C."/>
            <person name="Zhang J."/>
            <person name="Zhang Y."/>
            <person name="Li R."/>
            <person name="Xu Z."/>
            <person name="Li S."/>
            <person name="Li X."/>
            <person name="Zheng H."/>
            <person name="Cong L."/>
            <person name="Lin L."/>
            <person name="Yin J."/>
            <person name="Geng J."/>
            <person name="Li G."/>
            <person name="Shi J."/>
            <person name="Liu J."/>
            <person name="Lv H."/>
            <person name="Li J."/>
            <person name="Wang J."/>
            <person name="Deng Y."/>
            <person name="Ran L."/>
            <person name="Shi X."/>
            <person name="Wang X."/>
            <person name="Wu Q."/>
            <person name="Li C."/>
            <person name="Ren X."/>
            <person name="Wang J."/>
            <person name="Wang X."/>
            <person name="Li D."/>
            <person name="Liu D."/>
            <person name="Zhang X."/>
            <person name="Ji Z."/>
            <person name="Zhao W."/>
            <person name="Sun Y."/>
            <person name="Zhang Z."/>
            <person name="Bao J."/>
            <person name="Han Y."/>
            <person name="Dong L."/>
            <person name="Ji J."/>
            <person name="Chen P."/>
            <person name="Wu S."/>
            <person name="Liu J."/>
            <person name="Xiao Y."/>
            <person name="Bu D."/>
            <person name="Tan J."/>
            <person name="Yang L."/>
            <person name="Ye C."/>
            <person name="Zhang J."/>
            <person name="Xu J."/>
            <person name="Zhou Y."/>
            <person name="Yu Y."/>
            <person name="Zhang B."/>
            <person name="Zhuang S."/>
            <person name="Wei H."/>
            <person name="Liu B."/>
            <person name="Lei M."/>
            <person name="Yu H."/>
            <person name="Li Y."/>
            <person name="Xu H."/>
            <person name="Wei S."/>
            <person name="He X."/>
            <person name="Fang L."/>
            <person name="Zhang Z."/>
            <person name="Zhang Y."/>
            <person name="Huang X."/>
            <person name="Su Z."/>
            <person name="Tong W."/>
            <person name="Li J."/>
            <person name="Tong Z."/>
            <person name="Li S."/>
            <person name="Ye J."/>
            <person name="Wang L."/>
            <person name="Fang L."/>
            <person name="Lei T."/>
            <person name="Chen C.-S."/>
            <person name="Chen H.-C."/>
            <person name="Xu Z."/>
            <person name="Li H."/>
            <person name="Huang H."/>
            <person name="Zhang F."/>
            <person name="Xu H."/>
            <person name="Li N."/>
            <person name="Zhao C."/>
            <person name="Li S."/>
            <person name="Dong L."/>
            <person name="Huang Y."/>
            <person name="Li L."/>
            <person name="Xi Y."/>
            <person name="Qi Q."/>
            <person name="Li W."/>
            <person name="Zhang B."/>
            <person name="Hu W."/>
            <person name="Zhang Y."/>
            <person name="Tian X."/>
            <person name="Jiao Y."/>
            <person name="Liang X."/>
            <person name="Jin J."/>
            <person name="Gao L."/>
            <person name="Zheng W."/>
            <person name="Hao B."/>
            <person name="Liu S.-M."/>
            <person name="Wang W."/>
            <person name="Yuan L."/>
            <person name="Cao M."/>
            <person name="McDermott J."/>
            <person name="Samudrala R."/>
            <person name="Wang J."/>
            <person name="Wong G.K.-S."/>
            <person name="Yang H."/>
        </authorList>
    </citation>
    <scope>NUCLEOTIDE SEQUENCE [LARGE SCALE GENOMIC DNA]</scope>
    <source>
        <strain>cv. Nipponbare</strain>
    </source>
</reference>
<reference key="6">
    <citation type="journal article" date="2003" name="Science">
        <title>Collection, mapping, and annotation of over 28,000 cDNA clones from japonica rice.</title>
        <authorList>
            <consortium name="The rice full-length cDNA consortium"/>
        </authorList>
    </citation>
    <scope>NUCLEOTIDE SEQUENCE [LARGE SCALE MRNA]</scope>
    <source>
        <strain>cv. Nipponbare</strain>
    </source>
</reference>
<reference key="7">
    <citation type="journal article" date="2009" name="Mol. Plant">
        <title>Comparative genomic study of the thioredoxin family in photosynthetic organisms with emphasis on Populus trichocarpa.</title>
        <authorList>
            <person name="Chibani K."/>
            <person name="Wingsle G."/>
            <person name="Jacquot J.P."/>
            <person name="Gelhaye E."/>
            <person name="Rouhier N."/>
        </authorList>
    </citation>
    <scope>GENE FAMILY</scope>
    <scope>NOMENCLATURE</scope>
</reference>
<sequence>MGSFFSTMFTPPPAADDGGDSRVVAVHSTATWDEQWGAHKSNPNKLIVIDFSATWCGPCRFIEPAFKDMAGRFADAVFFKIDVDELSEVARQWKVEAMPTFVLIKGGKEVSRVVGAKKDELERKVNMFISSSSS</sequence>
<organism>
    <name type="scientific">Oryza sativa subsp. japonica</name>
    <name type="common">Rice</name>
    <dbReference type="NCBI Taxonomy" id="39947"/>
    <lineage>
        <taxon>Eukaryota</taxon>
        <taxon>Viridiplantae</taxon>
        <taxon>Streptophyta</taxon>
        <taxon>Embryophyta</taxon>
        <taxon>Tracheophyta</taxon>
        <taxon>Spermatophyta</taxon>
        <taxon>Magnoliopsida</taxon>
        <taxon>Liliopsida</taxon>
        <taxon>Poales</taxon>
        <taxon>Poaceae</taxon>
        <taxon>BOP clade</taxon>
        <taxon>Oryzoideae</taxon>
        <taxon>Oryzeae</taxon>
        <taxon>Oryzinae</taxon>
        <taxon>Oryza</taxon>
        <taxon>Oryza sativa</taxon>
    </lineage>
</organism>
<gene>
    <name type="ordered locus">Os03g0800700</name>
    <name type="ordered locus">LOC_Os03g58630</name>
    <name type="ORF">OsJ_12982</name>
    <name type="ORF">OSJNBa0052F07.8</name>
</gene>
<feature type="chain" id="PRO_0000394827" description="Thioredoxin H2-2">
    <location>
        <begin position="1"/>
        <end position="134"/>
    </location>
</feature>
<feature type="domain" description="Thioredoxin" evidence="2">
    <location>
        <begin position="3"/>
        <end position="130"/>
    </location>
</feature>
<feature type="region of interest" description="Disordered" evidence="3">
    <location>
        <begin position="1"/>
        <end position="20"/>
    </location>
</feature>
<feature type="active site" description="Nucleophile" evidence="1">
    <location>
        <position position="56"/>
    </location>
</feature>
<feature type="active site" description="Nucleophile" evidence="1">
    <location>
        <position position="59"/>
    </location>
</feature>
<feature type="site" description="Deprotonates C-terminal active site Cys" evidence="1">
    <location>
        <position position="50"/>
    </location>
</feature>
<feature type="site" description="Contributes to redox potential value" evidence="1">
    <location>
        <position position="57"/>
    </location>
</feature>
<feature type="site" description="Contributes to redox potential value" evidence="1">
    <location>
        <position position="58"/>
    </location>
</feature>
<feature type="disulfide bond" description="Redox-active" evidence="2">
    <location>
        <begin position="56"/>
        <end position="59"/>
    </location>
</feature>
<feature type="sequence conflict" description="In Ref. 6; AK062383." evidence="4" ref="6">
    <original>G</original>
    <variation>S</variation>
    <location>
        <position position="2"/>
    </location>
</feature>
<dbReference type="EMBL" id="AC104321">
    <property type="protein sequence ID" value="AAO37523.1"/>
    <property type="molecule type" value="Genomic_DNA"/>
</dbReference>
<dbReference type="EMBL" id="DP000009">
    <property type="protein sequence ID" value="ABF99385.1"/>
    <property type="molecule type" value="Genomic_DNA"/>
</dbReference>
<dbReference type="EMBL" id="AP008209">
    <property type="protein sequence ID" value="BAF13501.1"/>
    <property type="molecule type" value="Genomic_DNA"/>
</dbReference>
<dbReference type="EMBL" id="AP014959">
    <property type="protein sequence ID" value="BAS86888.1"/>
    <property type="molecule type" value="Genomic_DNA"/>
</dbReference>
<dbReference type="EMBL" id="CM000140">
    <property type="protein sequence ID" value="EEE60110.1"/>
    <property type="molecule type" value="Genomic_DNA"/>
</dbReference>
<dbReference type="EMBL" id="AK062383">
    <property type="status" value="NOT_ANNOTATED_CDS"/>
    <property type="molecule type" value="mRNA"/>
</dbReference>
<dbReference type="RefSeq" id="XP_015631704.1">
    <property type="nucleotide sequence ID" value="XM_015776218.1"/>
</dbReference>
<dbReference type="SMR" id="Q851R5"/>
<dbReference type="FunCoup" id="Q851R5">
    <property type="interactions" value="2252"/>
</dbReference>
<dbReference type="STRING" id="39947.Q851R5"/>
<dbReference type="PaxDb" id="39947-Q851R5"/>
<dbReference type="EnsemblPlants" id="Os03t0800700-01">
    <property type="protein sequence ID" value="Os03t0800700-01"/>
    <property type="gene ID" value="Os03g0800700"/>
</dbReference>
<dbReference type="Gramene" id="Os03t0800700-01">
    <property type="protein sequence ID" value="Os03t0800700-01"/>
    <property type="gene ID" value="Os03g0800700"/>
</dbReference>
<dbReference type="KEGG" id="dosa:Os03g0800700"/>
<dbReference type="eggNOG" id="KOG0907">
    <property type="taxonomic scope" value="Eukaryota"/>
</dbReference>
<dbReference type="HOGENOM" id="CLU_090389_14_1_1"/>
<dbReference type="InParanoid" id="Q851R5"/>
<dbReference type="OMA" id="SASWCGN"/>
<dbReference type="OrthoDB" id="10263751at2759"/>
<dbReference type="Proteomes" id="UP000000763">
    <property type="component" value="Chromosome 3"/>
</dbReference>
<dbReference type="Proteomes" id="UP000007752">
    <property type="component" value="Chromosome 3"/>
</dbReference>
<dbReference type="Proteomes" id="UP000059680">
    <property type="component" value="Chromosome 3"/>
</dbReference>
<dbReference type="GO" id="GO:0005737">
    <property type="term" value="C:cytoplasm"/>
    <property type="evidence" value="ECO:0007669"/>
    <property type="project" value="UniProtKB-SubCell"/>
</dbReference>
<dbReference type="CDD" id="cd02947">
    <property type="entry name" value="TRX_family"/>
    <property type="match status" value="1"/>
</dbReference>
<dbReference type="FunFam" id="3.40.30.10:FF:000245">
    <property type="entry name" value="Thioredoxin"/>
    <property type="match status" value="1"/>
</dbReference>
<dbReference type="Gene3D" id="3.40.30.10">
    <property type="entry name" value="Glutaredoxin"/>
    <property type="match status" value="1"/>
</dbReference>
<dbReference type="InterPro" id="IPR036249">
    <property type="entry name" value="Thioredoxin-like_sf"/>
</dbReference>
<dbReference type="InterPro" id="IPR017937">
    <property type="entry name" value="Thioredoxin_CS"/>
</dbReference>
<dbReference type="InterPro" id="IPR013766">
    <property type="entry name" value="Thioredoxin_domain"/>
</dbReference>
<dbReference type="InterPro" id="IPR050620">
    <property type="entry name" value="Thioredoxin_H-type-like"/>
</dbReference>
<dbReference type="PANTHER" id="PTHR10438">
    <property type="entry name" value="THIOREDOXIN"/>
    <property type="match status" value="1"/>
</dbReference>
<dbReference type="PANTHER" id="PTHR10438:SF463">
    <property type="entry name" value="THIOREDOXIN"/>
    <property type="match status" value="1"/>
</dbReference>
<dbReference type="Pfam" id="PF00085">
    <property type="entry name" value="Thioredoxin"/>
    <property type="match status" value="1"/>
</dbReference>
<dbReference type="PRINTS" id="PR00421">
    <property type="entry name" value="THIOREDOXIN"/>
</dbReference>
<dbReference type="SUPFAM" id="SSF52833">
    <property type="entry name" value="Thioredoxin-like"/>
    <property type="match status" value="1"/>
</dbReference>
<dbReference type="PROSITE" id="PS00194">
    <property type="entry name" value="THIOREDOXIN_1"/>
    <property type="match status" value="1"/>
</dbReference>
<dbReference type="PROSITE" id="PS51352">
    <property type="entry name" value="THIOREDOXIN_2"/>
    <property type="match status" value="1"/>
</dbReference>